<proteinExistence type="inferred from homology"/>
<sequence>MTKLDAKSIINYIGNAPKKTPVKVFIKGQLDQIDFPEEIENFNETHSGVIFGDWKDVEPFLKENQDKIQDYRIENNARNSAVPMIDMKKFDARIEPGAIIRDQVAIGKNAVIMMGAIINIGAEIGDDTMIDMGVVLGGRAIVGKHCHIGAGSVLAGVIEPASATPVKIDDNVVMGANAVVIEGVHVGEGAVIAAGAVVTHDVEPHTMVAGVPAKVIKKVDDQTESKTGLEDNLRKI</sequence>
<keyword id="KW-0012">Acyltransferase</keyword>
<keyword id="KW-0028">Amino-acid biosynthesis</keyword>
<keyword id="KW-0220">Diaminopimelate biosynthesis</keyword>
<keyword id="KW-0457">Lysine biosynthesis</keyword>
<keyword id="KW-0677">Repeat</keyword>
<keyword id="KW-0808">Transferase</keyword>
<organism>
    <name type="scientific">Lactobacillus helveticus (strain DPC 4571)</name>
    <dbReference type="NCBI Taxonomy" id="405566"/>
    <lineage>
        <taxon>Bacteria</taxon>
        <taxon>Bacillati</taxon>
        <taxon>Bacillota</taxon>
        <taxon>Bacilli</taxon>
        <taxon>Lactobacillales</taxon>
        <taxon>Lactobacillaceae</taxon>
        <taxon>Lactobacillus</taxon>
    </lineage>
</organism>
<evidence type="ECO:0000255" key="1">
    <source>
        <dbReference type="HAMAP-Rule" id="MF_01691"/>
    </source>
</evidence>
<gene>
    <name evidence="1" type="primary">dapH</name>
    <name type="ordered locus">lhv_0906</name>
</gene>
<name>DAPH_LACH4</name>
<dbReference type="EC" id="2.3.1.89" evidence="1"/>
<dbReference type="EMBL" id="CP000517">
    <property type="protein sequence ID" value="ABX27019.1"/>
    <property type="molecule type" value="Genomic_DNA"/>
</dbReference>
<dbReference type="SMR" id="A8YUT1"/>
<dbReference type="KEGG" id="lhe:lhv_0906"/>
<dbReference type="eggNOG" id="COG2171">
    <property type="taxonomic scope" value="Bacteria"/>
</dbReference>
<dbReference type="HOGENOM" id="CLU_103751_0_0_9"/>
<dbReference type="UniPathway" id="UPA00034">
    <property type="reaction ID" value="UER00022"/>
</dbReference>
<dbReference type="Proteomes" id="UP000000790">
    <property type="component" value="Chromosome"/>
</dbReference>
<dbReference type="GO" id="GO:0047200">
    <property type="term" value="F:tetrahydrodipicolinate N-acetyltransferase activity"/>
    <property type="evidence" value="ECO:0007669"/>
    <property type="project" value="UniProtKB-EC"/>
</dbReference>
<dbReference type="GO" id="GO:0019877">
    <property type="term" value="P:diaminopimelate biosynthetic process"/>
    <property type="evidence" value="ECO:0007669"/>
    <property type="project" value="UniProtKB-UniRule"/>
</dbReference>
<dbReference type="GO" id="GO:0009089">
    <property type="term" value="P:lysine biosynthetic process via diaminopimelate"/>
    <property type="evidence" value="ECO:0007669"/>
    <property type="project" value="UniProtKB-UniRule"/>
</dbReference>
<dbReference type="CDD" id="cd03350">
    <property type="entry name" value="LbH_THP_succinylT"/>
    <property type="match status" value="1"/>
</dbReference>
<dbReference type="Gene3D" id="2.160.10.10">
    <property type="entry name" value="Hexapeptide repeat proteins"/>
    <property type="match status" value="1"/>
</dbReference>
<dbReference type="Gene3D" id="3.30.70.250">
    <property type="entry name" value="Malonyl-CoA ACP transacylase, ACP-binding"/>
    <property type="match status" value="1"/>
</dbReference>
<dbReference type="HAMAP" id="MF_01691">
    <property type="entry name" value="DapH"/>
    <property type="match status" value="1"/>
</dbReference>
<dbReference type="InterPro" id="IPR019873">
    <property type="entry name" value="DapH"/>
</dbReference>
<dbReference type="InterPro" id="IPR013710">
    <property type="entry name" value="DapH_N"/>
</dbReference>
<dbReference type="InterPro" id="IPR001451">
    <property type="entry name" value="Hexapep"/>
</dbReference>
<dbReference type="InterPro" id="IPR050179">
    <property type="entry name" value="Trans_hexapeptide_repeat"/>
</dbReference>
<dbReference type="InterPro" id="IPR011004">
    <property type="entry name" value="Trimer_LpxA-like_sf"/>
</dbReference>
<dbReference type="NCBIfam" id="TIGR03532">
    <property type="entry name" value="DapD_Ac"/>
    <property type="match status" value="1"/>
</dbReference>
<dbReference type="PANTHER" id="PTHR43300:SF10">
    <property type="entry name" value="2,3,4,5-TETRAHYDROPYRIDINE-2,6-DICARBOXYLATE N-ACETYLTRANSFERASE"/>
    <property type="match status" value="1"/>
</dbReference>
<dbReference type="PANTHER" id="PTHR43300">
    <property type="entry name" value="ACETYLTRANSFERASE"/>
    <property type="match status" value="1"/>
</dbReference>
<dbReference type="Pfam" id="PF08503">
    <property type="entry name" value="DapH_N"/>
    <property type="match status" value="1"/>
</dbReference>
<dbReference type="Pfam" id="PF00132">
    <property type="entry name" value="Hexapep"/>
    <property type="match status" value="1"/>
</dbReference>
<dbReference type="Pfam" id="PF14602">
    <property type="entry name" value="Hexapep_2"/>
    <property type="match status" value="1"/>
</dbReference>
<dbReference type="SUPFAM" id="SSF51161">
    <property type="entry name" value="Trimeric LpxA-like enzymes"/>
    <property type="match status" value="1"/>
</dbReference>
<accession>A8YUT1</accession>
<reference key="1">
    <citation type="journal article" date="2008" name="J. Bacteriol.">
        <title>Genome sequence of Lactobacillus helveticus: an organism distinguished by selective gene loss and IS element expansion.</title>
        <authorList>
            <person name="Callanan M."/>
            <person name="Kaleta P."/>
            <person name="O'Callaghan J."/>
            <person name="O'Sullivan O."/>
            <person name="Jordan K."/>
            <person name="McAuliffe O."/>
            <person name="Sangrador-Vegas A."/>
            <person name="Slattery L."/>
            <person name="Fitzgerald G.F."/>
            <person name="Beresford T."/>
            <person name="Ross R.P."/>
        </authorList>
    </citation>
    <scope>NUCLEOTIDE SEQUENCE [LARGE SCALE GENOMIC DNA]</scope>
    <source>
        <strain>DPC 4571</strain>
    </source>
</reference>
<comment type="function">
    <text evidence="1">Catalyzes the transfer of an acetyl group from acetyl-CoA to tetrahydrodipicolinate.</text>
</comment>
<comment type="catalytic activity">
    <reaction evidence="1">
        <text>(S)-2,3,4,5-tetrahydrodipicolinate + acetyl-CoA + H2O = L-2-acetamido-6-oxoheptanedioate + CoA</text>
        <dbReference type="Rhea" id="RHEA:13085"/>
        <dbReference type="ChEBI" id="CHEBI:15377"/>
        <dbReference type="ChEBI" id="CHEBI:16845"/>
        <dbReference type="ChEBI" id="CHEBI:57287"/>
        <dbReference type="ChEBI" id="CHEBI:57288"/>
        <dbReference type="ChEBI" id="CHEBI:58117"/>
        <dbReference type="EC" id="2.3.1.89"/>
    </reaction>
</comment>
<comment type="pathway">
    <text evidence="1">Amino-acid biosynthesis; L-lysine biosynthesis via DAP pathway; LL-2,6-diaminopimelate from (S)-tetrahydrodipicolinate (acetylase route): step 1/3.</text>
</comment>
<comment type="similarity">
    <text evidence="1">Belongs to the transferase hexapeptide repeat family. DapH subfamily.</text>
</comment>
<protein>
    <recommendedName>
        <fullName evidence="1">2,3,4,5-tetrahydropyridine-2,6-dicarboxylate N-acetyltransferase</fullName>
        <ecNumber evidence="1">2.3.1.89</ecNumber>
    </recommendedName>
    <alternativeName>
        <fullName evidence="1">Tetrahydrodipicolinate N-acetyltransferase</fullName>
        <shortName evidence="1">THP acetyltransferase</shortName>
        <shortName evidence="1">Tetrahydropicolinate acetylase</shortName>
    </alternativeName>
</protein>
<feature type="chain" id="PRO_0000376665" description="2,3,4,5-tetrahydropyridine-2,6-dicarboxylate N-acetyltransferase">
    <location>
        <begin position="1"/>
        <end position="236"/>
    </location>
</feature>